<reference key="1">
    <citation type="journal article" date="2008" name="J. Bacteriol.">
        <title>The genome of Heliobacterium modesticaldum, a phototrophic representative of the Firmicutes containing the simplest photosynthetic apparatus.</title>
        <authorList>
            <person name="Sattley W.M."/>
            <person name="Madigan M.T."/>
            <person name="Swingley W.D."/>
            <person name="Cheung P.C."/>
            <person name="Clocksin K.M."/>
            <person name="Conrad A.L."/>
            <person name="Dejesa L.C."/>
            <person name="Honchak B.M."/>
            <person name="Jung D.O."/>
            <person name="Karbach L.E."/>
            <person name="Kurdoglu A."/>
            <person name="Lahiri S."/>
            <person name="Mastrian S.D."/>
            <person name="Page L.E."/>
            <person name="Taylor H.L."/>
            <person name="Wang Z.T."/>
            <person name="Raymond J."/>
            <person name="Chen M."/>
            <person name="Blankenship R.E."/>
            <person name="Touchman J.W."/>
        </authorList>
    </citation>
    <scope>NUCLEOTIDE SEQUENCE [LARGE SCALE GENOMIC DNA]</scope>
    <source>
        <strain>ATCC 51547 / Ice1</strain>
    </source>
</reference>
<dbReference type="EC" id="7.1.1.-" evidence="1"/>
<dbReference type="EMBL" id="CP000930">
    <property type="protein sequence ID" value="ABZ84753.1"/>
    <property type="molecule type" value="Genomic_DNA"/>
</dbReference>
<dbReference type="RefSeq" id="WP_012283253.1">
    <property type="nucleotide sequence ID" value="NC_010337.2"/>
</dbReference>
<dbReference type="SMR" id="B0TH78"/>
<dbReference type="STRING" id="498761.HM1_2197"/>
<dbReference type="KEGG" id="hmo:HM1_2197"/>
<dbReference type="eggNOG" id="COG0377">
    <property type="taxonomic scope" value="Bacteria"/>
</dbReference>
<dbReference type="HOGENOM" id="CLU_055737_7_3_9"/>
<dbReference type="OrthoDB" id="9786737at2"/>
<dbReference type="Proteomes" id="UP000008550">
    <property type="component" value="Chromosome"/>
</dbReference>
<dbReference type="GO" id="GO:0005886">
    <property type="term" value="C:plasma membrane"/>
    <property type="evidence" value="ECO:0007669"/>
    <property type="project" value="UniProtKB-SubCell"/>
</dbReference>
<dbReference type="GO" id="GO:0045271">
    <property type="term" value="C:respiratory chain complex I"/>
    <property type="evidence" value="ECO:0007669"/>
    <property type="project" value="TreeGrafter"/>
</dbReference>
<dbReference type="GO" id="GO:0051539">
    <property type="term" value="F:4 iron, 4 sulfur cluster binding"/>
    <property type="evidence" value="ECO:0007669"/>
    <property type="project" value="UniProtKB-KW"/>
</dbReference>
<dbReference type="GO" id="GO:0005506">
    <property type="term" value="F:iron ion binding"/>
    <property type="evidence" value="ECO:0007669"/>
    <property type="project" value="UniProtKB-UniRule"/>
</dbReference>
<dbReference type="GO" id="GO:0008137">
    <property type="term" value="F:NADH dehydrogenase (ubiquinone) activity"/>
    <property type="evidence" value="ECO:0007669"/>
    <property type="project" value="InterPro"/>
</dbReference>
<dbReference type="GO" id="GO:0050136">
    <property type="term" value="F:NADH:ubiquinone reductase (non-electrogenic) activity"/>
    <property type="evidence" value="ECO:0007669"/>
    <property type="project" value="UniProtKB-UniRule"/>
</dbReference>
<dbReference type="GO" id="GO:0048038">
    <property type="term" value="F:quinone binding"/>
    <property type="evidence" value="ECO:0007669"/>
    <property type="project" value="UniProtKB-KW"/>
</dbReference>
<dbReference type="GO" id="GO:0009060">
    <property type="term" value="P:aerobic respiration"/>
    <property type="evidence" value="ECO:0007669"/>
    <property type="project" value="TreeGrafter"/>
</dbReference>
<dbReference type="GO" id="GO:0015990">
    <property type="term" value="P:electron transport coupled proton transport"/>
    <property type="evidence" value="ECO:0007669"/>
    <property type="project" value="TreeGrafter"/>
</dbReference>
<dbReference type="FunFam" id="3.40.50.12280:FF:000002">
    <property type="entry name" value="NADH-quinone oxidoreductase subunit B"/>
    <property type="match status" value="1"/>
</dbReference>
<dbReference type="Gene3D" id="3.40.50.12280">
    <property type="match status" value="1"/>
</dbReference>
<dbReference type="HAMAP" id="MF_01356">
    <property type="entry name" value="NDH1_NuoB"/>
    <property type="match status" value="1"/>
</dbReference>
<dbReference type="InterPro" id="IPR006137">
    <property type="entry name" value="NADH_UbQ_OxRdtase-like_20kDa"/>
</dbReference>
<dbReference type="InterPro" id="IPR006138">
    <property type="entry name" value="NADH_UQ_OxRdtase_20Kd_su"/>
</dbReference>
<dbReference type="NCBIfam" id="TIGR01957">
    <property type="entry name" value="nuoB_fam"/>
    <property type="match status" value="1"/>
</dbReference>
<dbReference type="NCBIfam" id="NF005012">
    <property type="entry name" value="PRK06411.1"/>
    <property type="match status" value="1"/>
</dbReference>
<dbReference type="PANTHER" id="PTHR11995">
    <property type="entry name" value="NADH DEHYDROGENASE"/>
    <property type="match status" value="1"/>
</dbReference>
<dbReference type="PANTHER" id="PTHR11995:SF14">
    <property type="entry name" value="NADH DEHYDROGENASE [UBIQUINONE] IRON-SULFUR PROTEIN 7, MITOCHONDRIAL"/>
    <property type="match status" value="1"/>
</dbReference>
<dbReference type="Pfam" id="PF01058">
    <property type="entry name" value="Oxidored_q6"/>
    <property type="match status" value="1"/>
</dbReference>
<dbReference type="SUPFAM" id="SSF56770">
    <property type="entry name" value="HydA/Nqo6-like"/>
    <property type="match status" value="1"/>
</dbReference>
<dbReference type="PROSITE" id="PS01150">
    <property type="entry name" value="COMPLEX1_20K"/>
    <property type="match status" value="1"/>
</dbReference>
<keyword id="KW-0004">4Fe-4S</keyword>
<keyword id="KW-1003">Cell membrane</keyword>
<keyword id="KW-0408">Iron</keyword>
<keyword id="KW-0411">Iron-sulfur</keyword>
<keyword id="KW-0472">Membrane</keyword>
<keyword id="KW-0479">Metal-binding</keyword>
<keyword id="KW-0520">NAD</keyword>
<keyword id="KW-0874">Quinone</keyword>
<keyword id="KW-1185">Reference proteome</keyword>
<keyword id="KW-1278">Translocase</keyword>
<keyword id="KW-0813">Transport</keyword>
<feature type="chain" id="PRO_0000376253" description="NADH-quinone oxidoreductase subunit B">
    <location>
        <begin position="1"/>
        <end position="175"/>
    </location>
</feature>
<feature type="binding site" evidence="1">
    <location>
        <position position="49"/>
    </location>
    <ligand>
        <name>[4Fe-4S] cluster</name>
        <dbReference type="ChEBI" id="CHEBI:49883"/>
    </ligand>
</feature>
<feature type="binding site" evidence="1">
    <location>
        <position position="50"/>
    </location>
    <ligand>
        <name>[4Fe-4S] cluster</name>
        <dbReference type="ChEBI" id="CHEBI:49883"/>
    </ligand>
</feature>
<feature type="binding site" evidence="1">
    <location>
        <position position="115"/>
    </location>
    <ligand>
        <name>[4Fe-4S] cluster</name>
        <dbReference type="ChEBI" id="CHEBI:49883"/>
    </ligand>
</feature>
<feature type="binding site" evidence="1">
    <location>
        <position position="145"/>
    </location>
    <ligand>
        <name>[4Fe-4S] cluster</name>
        <dbReference type="ChEBI" id="CHEBI:49883"/>
    </ligand>
</feature>
<evidence type="ECO:0000255" key="1">
    <source>
        <dbReference type="HAMAP-Rule" id="MF_01356"/>
    </source>
</evidence>
<name>NUOB_HELMI</name>
<gene>
    <name evidence="1" type="primary">nuoB</name>
    <name type="ordered locus">Helmi_21280</name>
    <name type="ORF">HM1_2197</name>
</gene>
<accession>B0TH78</accession>
<proteinExistence type="inferred from homology"/>
<organism>
    <name type="scientific">Heliobacterium modesticaldum (strain ATCC 51547 / Ice1)</name>
    <dbReference type="NCBI Taxonomy" id="498761"/>
    <lineage>
        <taxon>Bacteria</taxon>
        <taxon>Bacillati</taxon>
        <taxon>Bacillota</taxon>
        <taxon>Clostridia</taxon>
        <taxon>Eubacteriales</taxon>
        <taxon>Heliobacteriaceae</taxon>
        <taxon>Heliomicrobium</taxon>
    </lineage>
</organism>
<sequence>MEIDKNVDTLSEGQVDELIKKNIIMTSLEAVFNWARGNSLWPLSSGLACCAIEMMATGASRFDMARFGYEVFRPSPRQADLIIIAGTLTWKMAPAIQRVYEQMPEPKWIIAMGSCACTGGPFADSYAVVPGVDKVIPVDVYVPGCPPRPEALLDGFLKLKAKIQNPAKVGLKHGK</sequence>
<comment type="function">
    <text evidence="1">NDH-1 shuttles electrons from NADH, via FMN and iron-sulfur (Fe-S) centers, to quinones in the respiratory chain. The immediate electron acceptor for the enzyme in this species is believed to be a menaquinone. Couples the redox reaction to proton translocation (for every two electrons transferred, four hydrogen ions are translocated across the cytoplasmic membrane), and thus conserves the redox energy in a proton gradient.</text>
</comment>
<comment type="catalytic activity">
    <reaction evidence="1">
        <text>a quinone + NADH + 5 H(+)(in) = a quinol + NAD(+) + 4 H(+)(out)</text>
        <dbReference type="Rhea" id="RHEA:57888"/>
        <dbReference type="ChEBI" id="CHEBI:15378"/>
        <dbReference type="ChEBI" id="CHEBI:24646"/>
        <dbReference type="ChEBI" id="CHEBI:57540"/>
        <dbReference type="ChEBI" id="CHEBI:57945"/>
        <dbReference type="ChEBI" id="CHEBI:132124"/>
    </reaction>
</comment>
<comment type="cofactor">
    <cofactor evidence="1">
        <name>[4Fe-4S] cluster</name>
        <dbReference type="ChEBI" id="CHEBI:49883"/>
    </cofactor>
    <text evidence="1">Binds 1 [4Fe-4S] cluster.</text>
</comment>
<comment type="subunit">
    <text evidence="1">NDH-1 is composed of 14 different subunits. Subunits NuoB, C, D, E, F, and G constitute the peripheral sector of the complex.</text>
</comment>
<comment type="subcellular location">
    <subcellularLocation>
        <location evidence="1">Cell membrane</location>
        <topology evidence="1">Peripheral membrane protein</topology>
        <orientation evidence="1">Cytoplasmic side</orientation>
    </subcellularLocation>
</comment>
<comment type="similarity">
    <text evidence="1">Belongs to the complex I 20 kDa subunit family.</text>
</comment>
<protein>
    <recommendedName>
        <fullName evidence="1">NADH-quinone oxidoreductase subunit B</fullName>
        <ecNumber evidence="1">7.1.1.-</ecNumber>
    </recommendedName>
    <alternativeName>
        <fullName evidence="1">NADH dehydrogenase I subunit B</fullName>
    </alternativeName>
    <alternativeName>
        <fullName evidence="1">NDH-1 subunit B</fullName>
    </alternativeName>
</protein>